<organism>
    <name type="scientific">Crotalus basiliscus</name>
    <name type="common">Mexican west-coast rattlesnake</name>
    <dbReference type="NCBI Taxonomy" id="8744"/>
    <lineage>
        <taxon>Eukaryota</taxon>
        <taxon>Metazoa</taxon>
        <taxon>Chordata</taxon>
        <taxon>Craniata</taxon>
        <taxon>Vertebrata</taxon>
        <taxon>Euteleostomi</taxon>
        <taxon>Lepidosauria</taxon>
        <taxon>Squamata</taxon>
        <taxon>Bifurcata</taxon>
        <taxon>Unidentata</taxon>
        <taxon>Episquamata</taxon>
        <taxon>Toxicofera</taxon>
        <taxon>Serpentes</taxon>
        <taxon>Colubroidea</taxon>
        <taxon>Viperidae</taxon>
        <taxon>Crotalinae</taxon>
        <taxon>Crotalus</taxon>
    </lineage>
</organism>
<dbReference type="EC" id="3.1.1.4"/>
<dbReference type="GO" id="GO:0005576">
    <property type="term" value="C:extracellular region"/>
    <property type="evidence" value="ECO:0007669"/>
    <property type="project" value="UniProtKB-SubCell"/>
</dbReference>
<dbReference type="GO" id="GO:0046872">
    <property type="term" value="F:metal ion binding"/>
    <property type="evidence" value="ECO:0007669"/>
    <property type="project" value="UniProtKB-KW"/>
</dbReference>
<dbReference type="GO" id="GO:0004623">
    <property type="term" value="F:phospholipase A2 activity"/>
    <property type="evidence" value="ECO:0007669"/>
    <property type="project" value="UniProtKB-EC"/>
</dbReference>
<dbReference type="GO" id="GO:0090729">
    <property type="term" value="F:toxin activity"/>
    <property type="evidence" value="ECO:0007669"/>
    <property type="project" value="UniProtKB-KW"/>
</dbReference>
<dbReference type="GO" id="GO:0016042">
    <property type="term" value="P:lipid catabolic process"/>
    <property type="evidence" value="ECO:0007669"/>
    <property type="project" value="UniProtKB-KW"/>
</dbReference>
<feature type="chain" id="PRO_0000418564" description="Basic phospholipase A2 CB1">
    <location>
        <begin position="1"/>
        <end position="23" status="greater than"/>
    </location>
</feature>
<feature type="non-terminal residue">
    <location>
        <position position="23"/>
    </location>
</feature>
<accession>P0DJM9</accession>
<reference key="1">
    <citation type="journal article" date="2004" name="Biochem. J.">
        <title>Molecular evolution and structure-function relationships of crotoxin-like and asparagine-6-containing phospholipases A2 in pit viper venoms.</title>
        <authorList>
            <person name="Chen Y.-H."/>
            <person name="Wang Y.-M."/>
            <person name="Hseu M.-J."/>
            <person name="Tsai I.-H."/>
        </authorList>
    </citation>
    <scope>PROTEIN SEQUENCE</scope>
    <scope>FUNCTION</scope>
    <scope>SUBUNIT</scope>
    <scope>MASS SPECTROMETRY</scope>
    <source>
        <tissue>Venom</tissue>
    </source>
</reference>
<keyword id="KW-0106">Calcium</keyword>
<keyword id="KW-0903">Direct protein sequencing</keyword>
<keyword id="KW-1015">Disulfide bond</keyword>
<keyword id="KW-0378">Hydrolase</keyword>
<keyword id="KW-0442">Lipid degradation</keyword>
<keyword id="KW-0443">Lipid metabolism</keyword>
<keyword id="KW-0479">Metal-binding</keyword>
<keyword id="KW-0528">Neurotoxin</keyword>
<keyword id="KW-0638">Presynaptic neurotoxin</keyword>
<keyword id="KW-0964">Secreted</keyword>
<keyword id="KW-0800">Toxin</keyword>
<name>PA2B1_CROBA</name>
<evidence type="ECO:0000250" key="1"/>
<evidence type="ECO:0000269" key="2">
    <source>
    </source>
</evidence>
<evidence type="ECO:0000305" key="3"/>
<protein>
    <recommendedName>
        <fullName>Basic phospholipase A2 CB1</fullName>
        <shortName>svPLA2</shortName>
        <ecNumber>3.1.1.4</ecNumber>
    </recommendedName>
    <alternativeName>
        <fullName>Phosphatidylcholine 2-acylhydrolase</fullName>
    </alternativeName>
</protein>
<comment type="function">
    <text evidence="2">Snake venom phospholipase A2 (PLA2) that shows presynaptic neurotoxicity. PLA2 catalyzes the calcium-dependent hydrolysis of the 2-acyl groups in 3-sn-phosphoglycerides.</text>
</comment>
<comment type="catalytic activity">
    <reaction>
        <text>a 1,2-diacyl-sn-glycero-3-phosphocholine + H2O = a 1-acyl-sn-glycero-3-phosphocholine + a fatty acid + H(+)</text>
        <dbReference type="Rhea" id="RHEA:15801"/>
        <dbReference type="ChEBI" id="CHEBI:15377"/>
        <dbReference type="ChEBI" id="CHEBI:15378"/>
        <dbReference type="ChEBI" id="CHEBI:28868"/>
        <dbReference type="ChEBI" id="CHEBI:57643"/>
        <dbReference type="ChEBI" id="CHEBI:58168"/>
        <dbReference type="EC" id="3.1.1.4"/>
    </reaction>
</comment>
<comment type="cofactor">
    <cofactor evidence="1">
        <name>Ca(2+)</name>
        <dbReference type="ChEBI" id="CHEBI:29108"/>
    </cofactor>
    <text evidence="1">Binds 1 Ca(2+) ion.</text>
</comment>
<comment type="subunit">
    <text evidence="2">Heterodimer of an acidic subunit and a basic chain. The acidic subunit is non-toxic, without enzymatic activity and comprises 3 peptides that are cross-linked by 7 disulfide bridges. The basic subunit is toxic, has phospholipase A2 activity and is composed of a single chain.</text>
</comment>
<comment type="subcellular location">
    <subcellularLocation>
        <location>Secreted</location>
    </subcellularLocation>
</comment>
<comment type="tissue specificity">
    <text>Expressed by the venom gland.</text>
</comment>
<comment type="PTM">
    <text evidence="1">Contains 7 disulfide bonds.</text>
</comment>
<comment type="mass spectrometry" mass="14183.0" method="Electrospray" evidence="2"/>
<comment type="similarity">
    <text evidence="3">Belongs to the phospholipase A2 family. Group II subfamily.</text>
</comment>
<proteinExistence type="evidence at protein level"/>
<sequence length="23" mass="2857">HLLQFNKMIKFETRKNAIPFYAF</sequence>